<protein>
    <recommendedName>
        <fullName evidence="1">Succinyl-diaminopimelate desuccinylase</fullName>
        <shortName evidence="1">SDAP desuccinylase</shortName>
        <ecNumber evidence="1">3.5.1.18</ecNumber>
    </recommendedName>
    <alternativeName>
        <fullName evidence="1">N-succinyl-LL-2,6-diaminoheptanedioate amidohydrolase</fullName>
    </alternativeName>
</protein>
<keyword id="KW-0028">Amino-acid biosynthesis</keyword>
<keyword id="KW-0170">Cobalt</keyword>
<keyword id="KW-0220">Diaminopimelate biosynthesis</keyword>
<keyword id="KW-0378">Hydrolase</keyword>
<keyword id="KW-0457">Lysine biosynthesis</keyword>
<keyword id="KW-0479">Metal-binding</keyword>
<keyword id="KW-0862">Zinc</keyword>
<feature type="chain" id="PRO_0000375741" description="Succinyl-diaminopimelate desuccinylase">
    <location>
        <begin position="1"/>
        <end position="381"/>
    </location>
</feature>
<feature type="active site" evidence="1">
    <location>
        <position position="74"/>
    </location>
</feature>
<feature type="active site" description="Proton acceptor" evidence="1">
    <location>
        <position position="139"/>
    </location>
</feature>
<feature type="binding site" evidence="1">
    <location>
        <position position="72"/>
    </location>
    <ligand>
        <name>Zn(2+)</name>
        <dbReference type="ChEBI" id="CHEBI:29105"/>
        <label>1</label>
    </ligand>
</feature>
<feature type="binding site" evidence="1">
    <location>
        <position position="105"/>
    </location>
    <ligand>
        <name>Zn(2+)</name>
        <dbReference type="ChEBI" id="CHEBI:29105"/>
        <label>1</label>
    </ligand>
</feature>
<feature type="binding site" evidence="1">
    <location>
        <position position="105"/>
    </location>
    <ligand>
        <name>Zn(2+)</name>
        <dbReference type="ChEBI" id="CHEBI:29105"/>
        <label>2</label>
    </ligand>
</feature>
<feature type="binding site" evidence="1">
    <location>
        <position position="140"/>
    </location>
    <ligand>
        <name>Zn(2+)</name>
        <dbReference type="ChEBI" id="CHEBI:29105"/>
        <label>2</label>
    </ligand>
</feature>
<feature type="binding site" evidence="1">
    <location>
        <position position="168"/>
    </location>
    <ligand>
        <name>Zn(2+)</name>
        <dbReference type="ChEBI" id="CHEBI:29105"/>
        <label>1</label>
    </ligand>
</feature>
<feature type="binding site" evidence="1">
    <location>
        <position position="354"/>
    </location>
    <ligand>
        <name>Zn(2+)</name>
        <dbReference type="ChEBI" id="CHEBI:29105"/>
        <label>2</label>
    </ligand>
</feature>
<sequence length="381" mass="41431">MTHASNSHPVTELTKELIARPSVTPLDEGCQTLMAERLAAIGFNIEPMVFEDTTNMWARRGNEGPVFCFAGHTDVVPAGDLSRWHTPPFEPTIIDGYLYGRGAADMKGSLAAMIVATERFVAKHPNHPGSIAFLITSDEEGPFINGTTRVIDTLEARNEKITWALVGEPSSTLKLGDVVKNGRRGSLTANLTVKGIQGHVAYPHLADNPIHKAAPFLAELSQTHWDNGNEFFPPTSMQIANINGGTGASNVIPGTLEVMFNFRYSTEVTAEILIERVEALLTAHELDYDISWTFNGLPFLTGEGPLLDATRHAIRQITGYDTDPQTTGGTSDGRFIAPTGAKVLELGPVNATIHKVNECVKIDDLEQLALCYEVILEQLLC</sequence>
<reference key="1">
    <citation type="submission" date="2006-08" db="EMBL/GenBank/DDBJ databases">
        <title>Complete sequence of Shewanella sp. MR-4.</title>
        <authorList>
            <consortium name="US DOE Joint Genome Institute"/>
            <person name="Copeland A."/>
            <person name="Lucas S."/>
            <person name="Lapidus A."/>
            <person name="Barry K."/>
            <person name="Detter J.C."/>
            <person name="Glavina del Rio T."/>
            <person name="Hammon N."/>
            <person name="Israni S."/>
            <person name="Dalin E."/>
            <person name="Tice H."/>
            <person name="Pitluck S."/>
            <person name="Kiss H."/>
            <person name="Brettin T."/>
            <person name="Bruce D."/>
            <person name="Han C."/>
            <person name="Tapia R."/>
            <person name="Gilna P."/>
            <person name="Schmutz J."/>
            <person name="Larimer F."/>
            <person name="Land M."/>
            <person name="Hauser L."/>
            <person name="Kyrpides N."/>
            <person name="Mikhailova N."/>
            <person name="Nealson K."/>
            <person name="Konstantinidis K."/>
            <person name="Klappenbach J."/>
            <person name="Tiedje J."/>
            <person name="Richardson P."/>
        </authorList>
    </citation>
    <scope>NUCLEOTIDE SEQUENCE [LARGE SCALE GENOMIC DNA]</scope>
    <source>
        <strain>MR-4</strain>
    </source>
</reference>
<proteinExistence type="inferred from homology"/>
<gene>
    <name evidence="1" type="primary">dapE</name>
    <name type="ordered locus">Shewmr4_1857</name>
</gene>
<dbReference type="EC" id="3.5.1.18" evidence="1"/>
<dbReference type="EMBL" id="CP000446">
    <property type="protein sequence ID" value="ABI38931.1"/>
    <property type="molecule type" value="Genomic_DNA"/>
</dbReference>
<dbReference type="RefSeq" id="WP_011622628.1">
    <property type="nucleotide sequence ID" value="NC_008321.1"/>
</dbReference>
<dbReference type="SMR" id="Q0HJ36"/>
<dbReference type="KEGG" id="she:Shewmr4_1857"/>
<dbReference type="HOGENOM" id="CLU_021802_4_0_6"/>
<dbReference type="UniPathway" id="UPA00034">
    <property type="reaction ID" value="UER00021"/>
</dbReference>
<dbReference type="GO" id="GO:0008777">
    <property type="term" value="F:acetylornithine deacetylase activity"/>
    <property type="evidence" value="ECO:0007669"/>
    <property type="project" value="TreeGrafter"/>
</dbReference>
<dbReference type="GO" id="GO:0050897">
    <property type="term" value="F:cobalt ion binding"/>
    <property type="evidence" value="ECO:0007669"/>
    <property type="project" value="UniProtKB-UniRule"/>
</dbReference>
<dbReference type="GO" id="GO:0009014">
    <property type="term" value="F:succinyl-diaminopimelate desuccinylase activity"/>
    <property type="evidence" value="ECO:0007669"/>
    <property type="project" value="UniProtKB-UniRule"/>
</dbReference>
<dbReference type="GO" id="GO:0008270">
    <property type="term" value="F:zinc ion binding"/>
    <property type="evidence" value="ECO:0007669"/>
    <property type="project" value="UniProtKB-UniRule"/>
</dbReference>
<dbReference type="GO" id="GO:0019877">
    <property type="term" value="P:diaminopimelate biosynthetic process"/>
    <property type="evidence" value="ECO:0007669"/>
    <property type="project" value="UniProtKB-UniRule"/>
</dbReference>
<dbReference type="GO" id="GO:0006526">
    <property type="term" value="P:L-arginine biosynthetic process"/>
    <property type="evidence" value="ECO:0007669"/>
    <property type="project" value="TreeGrafter"/>
</dbReference>
<dbReference type="GO" id="GO:0009089">
    <property type="term" value="P:lysine biosynthetic process via diaminopimelate"/>
    <property type="evidence" value="ECO:0007669"/>
    <property type="project" value="UniProtKB-UniRule"/>
</dbReference>
<dbReference type="CDD" id="cd03891">
    <property type="entry name" value="M20_DapE_proteobac"/>
    <property type="match status" value="1"/>
</dbReference>
<dbReference type="FunFam" id="3.30.70.360:FF:000011">
    <property type="entry name" value="Succinyl-diaminopimelate desuccinylase"/>
    <property type="match status" value="1"/>
</dbReference>
<dbReference type="FunFam" id="3.40.630.10:FF:000005">
    <property type="entry name" value="Succinyl-diaminopimelate desuccinylase"/>
    <property type="match status" value="1"/>
</dbReference>
<dbReference type="FunFam" id="3.40.630.10:FF:000192">
    <property type="entry name" value="Succinyl-diaminopimelate desuccinylase"/>
    <property type="match status" value="1"/>
</dbReference>
<dbReference type="Gene3D" id="3.40.630.10">
    <property type="entry name" value="Zn peptidases"/>
    <property type="match status" value="2"/>
</dbReference>
<dbReference type="HAMAP" id="MF_01690">
    <property type="entry name" value="DapE"/>
    <property type="match status" value="1"/>
</dbReference>
<dbReference type="InterPro" id="IPR001261">
    <property type="entry name" value="ArgE/DapE_CS"/>
</dbReference>
<dbReference type="InterPro" id="IPR036264">
    <property type="entry name" value="Bact_exopeptidase_dim_dom"/>
</dbReference>
<dbReference type="InterPro" id="IPR005941">
    <property type="entry name" value="DapE_proteobac"/>
</dbReference>
<dbReference type="InterPro" id="IPR002933">
    <property type="entry name" value="Peptidase_M20"/>
</dbReference>
<dbReference type="InterPro" id="IPR011650">
    <property type="entry name" value="Peptidase_M20_dimer"/>
</dbReference>
<dbReference type="InterPro" id="IPR050072">
    <property type="entry name" value="Peptidase_M20A"/>
</dbReference>
<dbReference type="NCBIfam" id="TIGR01246">
    <property type="entry name" value="dapE_proteo"/>
    <property type="match status" value="1"/>
</dbReference>
<dbReference type="NCBIfam" id="NF009557">
    <property type="entry name" value="PRK13009.1"/>
    <property type="match status" value="1"/>
</dbReference>
<dbReference type="PANTHER" id="PTHR43808">
    <property type="entry name" value="ACETYLORNITHINE DEACETYLASE"/>
    <property type="match status" value="1"/>
</dbReference>
<dbReference type="PANTHER" id="PTHR43808:SF31">
    <property type="entry name" value="N-ACETYL-L-CITRULLINE DEACETYLASE"/>
    <property type="match status" value="1"/>
</dbReference>
<dbReference type="Pfam" id="PF07687">
    <property type="entry name" value="M20_dimer"/>
    <property type="match status" value="1"/>
</dbReference>
<dbReference type="Pfam" id="PF01546">
    <property type="entry name" value="Peptidase_M20"/>
    <property type="match status" value="1"/>
</dbReference>
<dbReference type="SUPFAM" id="SSF55031">
    <property type="entry name" value="Bacterial exopeptidase dimerisation domain"/>
    <property type="match status" value="1"/>
</dbReference>
<dbReference type="SUPFAM" id="SSF53187">
    <property type="entry name" value="Zn-dependent exopeptidases"/>
    <property type="match status" value="1"/>
</dbReference>
<dbReference type="PROSITE" id="PS00759">
    <property type="entry name" value="ARGE_DAPE_CPG2_2"/>
    <property type="match status" value="1"/>
</dbReference>
<organism>
    <name type="scientific">Shewanella sp. (strain MR-4)</name>
    <dbReference type="NCBI Taxonomy" id="60480"/>
    <lineage>
        <taxon>Bacteria</taxon>
        <taxon>Pseudomonadati</taxon>
        <taxon>Pseudomonadota</taxon>
        <taxon>Gammaproteobacteria</taxon>
        <taxon>Alteromonadales</taxon>
        <taxon>Shewanellaceae</taxon>
        <taxon>Shewanella</taxon>
    </lineage>
</organism>
<evidence type="ECO:0000255" key="1">
    <source>
        <dbReference type="HAMAP-Rule" id="MF_01690"/>
    </source>
</evidence>
<accession>Q0HJ36</accession>
<comment type="function">
    <text evidence="1">Catalyzes the hydrolysis of N-succinyl-L,L-diaminopimelic acid (SDAP), forming succinate and LL-2,6-diaminopimelate (DAP), an intermediate involved in the bacterial biosynthesis of lysine and meso-diaminopimelic acid, an essential component of bacterial cell walls.</text>
</comment>
<comment type="catalytic activity">
    <reaction evidence="1">
        <text>N-succinyl-(2S,6S)-2,6-diaminopimelate + H2O = (2S,6S)-2,6-diaminopimelate + succinate</text>
        <dbReference type="Rhea" id="RHEA:22608"/>
        <dbReference type="ChEBI" id="CHEBI:15377"/>
        <dbReference type="ChEBI" id="CHEBI:30031"/>
        <dbReference type="ChEBI" id="CHEBI:57609"/>
        <dbReference type="ChEBI" id="CHEBI:58087"/>
        <dbReference type="EC" id="3.5.1.18"/>
    </reaction>
</comment>
<comment type="cofactor">
    <cofactor evidence="1">
        <name>Zn(2+)</name>
        <dbReference type="ChEBI" id="CHEBI:29105"/>
    </cofactor>
    <cofactor evidence="1">
        <name>Co(2+)</name>
        <dbReference type="ChEBI" id="CHEBI:48828"/>
    </cofactor>
    <text evidence="1">Binds 2 Zn(2+) or Co(2+) ions per subunit.</text>
</comment>
<comment type="pathway">
    <text evidence="1">Amino-acid biosynthesis; L-lysine biosynthesis via DAP pathway; LL-2,6-diaminopimelate from (S)-tetrahydrodipicolinate (succinylase route): step 3/3.</text>
</comment>
<comment type="subunit">
    <text evidence="1">Homodimer.</text>
</comment>
<comment type="similarity">
    <text evidence="1">Belongs to the peptidase M20A family. DapE subfamily.</text>
</comment>
<name>DAPE_SHESM</name>